<protein>
    <recommendedName>
        <fullName evidence="1">Ribosome maturation factor RimM</fullName>
    </recommendedName>
</protein>
<organism>
    <name type="scientific">Shewanella baltica (strain OS185)</name>
    <dbReference type="NCBI Taxonomy" id="402882"/>
    <lineage>
        <taxon>Bacteria</taxon>
        <taxon>Pseudomonadati</taxon>
        <taxon>Pseudomonadota</taxon>
        <taxon>Gammaproteobacteria</taxon>
        <taxon>Alteromonadales</taxon>
        <taxon>Shewanellaceae</taxon>
        <taxon>Shewanella</taxon>
    </lineage>
</organism>
<dbReference type="EMBL" id="CP000753">
    <property type="protein sequence ID" value="ABS07406.1"/>
    <property type="molecule type" value="Genomic_DNA"/>
</dbReference>
<dbReference type="RefSeq" id="WP_006080789.1">
    <property type="nucleotide sequence ID" value="NC_009665.1"/>
</dbReference>
<dbReference type="SMR" id="A6WKR7"/>
<dbReference type="GeneID" id="11771556"/>
<dbReference type="KEGG" id="sbm:Shew185_1255"/>
<dbReference type="HOGENOM" id="CLU_077636_1_0_6"/>
<dbReference type="GO" id="GO:0005737">
    <property type="term" value="C:cytoplasm"/>
    <property type="evidence" value="ECO:0007669"/>
    <property type="project" value="UniProtKB-SubCell"/>
</dbReference>
<dbReference type="GO" id="GO:0005840">
    <property type="term" value="C:ribosome"/>
    <property type="evidence" value="ECO:0007669"/>
    <property type="project" value="InterPro"/>
</dbReference>
<dbReference type="GO" id="GO:0043022">
    <property type="term" value="F:ribosome binding"/>
    <property type="evidence" value="ECO:0007669"/>
    <property type="project" value="InterPro"/>
</dbReference>
<dbReference type="GO" id="GO:0042274">
    <property type="term" value="P:ribosomal small subunit biogenesis"/>
    <property type="evidence" value="ECO:0007669"/>
    <property type="project" value="UniProtKB-UniRule"/>
</dbReference>
<dbReference type="GO" id="GO:0006364">
    <property type="term" value="P:rRNA processing"/>
    <property type="evidence" value="ECO:0007669"/>
    <property type="project" value="UniProtKB-UniRule"/>
</dbReference>
<dbReference type="Gene3D" id="2.30.30.240">
    <property type="entry name" value="PRC-barrel domain"/>
    <property type="match status" value="1"/>
</dbReference>
<dbReference type="Gene3D" id="2.40.30.60">
    <property type="entry name" value="RimM"/>
    <property type="match status" value="1"/>
</dbReference>
<dbReference type="HAMAP" id="MF_00014">
    <property type="entry name" value="Ribosome_mat_RimM"/>
    <property type="match status" value="1"/>
</dbReference>
<dbReference type="InterPro" id="IPR011033">
    <property type="entry name" value="PRC_barrel-like_sf"/>
</dbReference>
<dbReference type="InterPro" id="IPR056792">
    <property type="entry name" value="PRC_RimM"/>
</dbReference>
<dbReference type="InterPro" id="IPR011961">
    <property type="entry name" value="RimM"/>
</dbReference>
<dbReference type="InterPro" id="IPR002676">
    <property type="entry name" value="RimM_N"/>
</dbReference>
<dbReference type="InterPro" id="IPR036976">
    <property type="entry name" value="RimM_N_sf"/>
</dbReference>
<dbReference type="InterPro" id="IPR009000">
    <property type="entry name" value="Transl_B-barrel_sf"/>
</dbReference>
<dbReference type="NCBIfam" id="TIGR02273">
    <property type="entry name" value="16S_RimM"/>
    <property type="match status" value="1"/>
</dbReference>
<dbReference type="PANTHER" id="PTHR33692">
    <property type="entry name" value="RIBOSOME MATURATION FACTOR RIMM"/>
    <property type="match status" value="1"/>
</dbReference>
<dbReference type="PANTHER" id="PTHR33692:SF1">
    <property type="entry name" value="RIBOSOME MATURATION FACTOR RIMM"/>
    <property type="match status" value="1"/>
</dbReference>
<dbReference type="Pfam" id="PF24986">
    <property type="entry name" value="PRC_RimM"/>
    <property type="match status" value="1"/>
</dbReference>
<dbReference type="Pfam" id="PF01782">
    <property type="entry name" value="RimM"/>
    <property type="match status" value="1"/>
</dbReference>
<dbReference type="SUPFAM" id="SSF50346">
    <property type="entry name" value="PRC-barrel domain"/>
    <property type="match status" value="1"/>
</dbReference>
<dbReference type="SUPFAM" id="SSF50447">
    <property type="entry name" value="Translation proteins"/>
    <property type="match status" value="1"/>
</dbReference>
<feature type="chain" id="PRO_0000321754" description="Ribosome maturation factor RimM">
    <location>
        <begin position="1"/>
        <end position="176"/>
    </location>
</feature>
<feature type="domain" description="PRC barrel" evidence="1">
    <location>
        <begin position="97"/>
        <end position="176"/>
    </location>
</feature>
<comment type="function">
    <text evidence="1">An accessory protein needed during the final step in the assembly of 30S ribosomal subunit, possibly for assembly of the head region. Essential for efficient processing of 16S rRNA. May be needed both before and after RbfA during the maturation of 16S rRNA. It has affinity for free ribosomal 30S subunits but not for 70S ribosomes.</text>
</comment>
<comment type="subunit">
    <text evidence="1">Binds ribosomal protein uS19.</text>
</comment>
<comment type="subcellular location">
    <subcellularLocation>
        <location evidence="1">Cytoplasm</location>
    </subcellularLocation>
</comment>
<comment type="domain">
    <text evidence="1">The PRC barrel domain binds ribosomal protein uS19.</text>
</comment>
<comment type="similarity">
    <text evidence="1">Belongs to the RimM family.</text>
</comment>
<evidence type="ECO:0000255" key="1">
    <source>
        <dbReference type="HAMAP-Rule" id="MF_00014"/>
    </source>
</evidence>
<proteinExistence type="inferred from homology"/>
<accession>A6WKR7</accession>
<keyword id="KW-0143">Chaperone</keyword>
<keyword id="KW-0963">Cytoplasm</keyword>
<keyword id="KW-0690">Ribosome biogenesis</keyword>
<keyword id="KW-0698">rRNA processing</keyword>
<reference key="1">
    <citation type="submission" date="2007-07" db="EMBL/GenBank/DDBJ databases">
        <title>Complete sequence of chromosome of Shewanella baltica OS185.</title>
        <authorList>
            <consortium name="US DOE Joint Genome Institute"/>
            <person name="Copeland A."/>
            <person name="Lucas S."/>
            <person name="Lapidus A."/>
            <person name="Barry K."/>
            <person name="Glavina del Rio T."/>
            <person name="Dalin E."/>
            <person name="Tice H."/>
            <person name="Pitluck S."/>
            <person name="Sims D."/>
            <person name="Brettin T."/>
            <person name="Bruce D."/>
            <person name="Detter J.C."/>
            <person name="Han C."/>
            <person name="Schmutz J."/>
            <person name="Larimer F."/>
            <person name="Land M."/>
            <person name="Hauser L."/>
            <person name="Kyrpides N."/>
            <person name="Mikhailova N."/>
            <person name="Brettar I."/>
            <person name="Rodrigues J."/>
            <person name="Konstantinidis K."/>
            <person name="Tiedje J."/>
            <person name="Richardson P."/>
        </authorList>
    </citation>
    <scope>NUCLEOTIDE SEQUENCE [LARGE SCALE GENOMIC DNA]</scope>
    <source>
        <strain>OS185</strain>
    </source>
</reference>
<gene>
    <name evidence="1" type="primary">rimM</name>
    <name type="ordered locus">Shew185_1255</name>
</gene>
<name>RIMM_SHEB8</name>
<sequence length="176" mass="19932">MSSNQQPVVLGKLGSCHGIKGWLKITAYTDSVEGIFDYSPWLIKENGEWREIKVTQWRYQGKAVVALLDGVETREQAQMLTNCEIAILPEQMNDLPADEFYWRDLIGCEVVNTTGYNMGIVDQIVETGSNDVLLVKANAKDSFGKVERMIPFVPEQFIKTVDLQGKQILVDWDPDF</sequence>